<reference key="1">
    <citation type="journal article" date="1986" name="Biochim. Biophys. Acta">
        <title>The amino acid sequence of ascidian (Halocynthia roretzi) myosin light chains.</title>
        <authorList>
            <person name="Takagi T."/>
            <person name="Kudoh S."/>
            <person name="Konishi K."/>
        </authorList>
    </citation>
    <scope>PROTEIN SEQUENCE</scope>
    <scope>ACETYLATION AT ALA-1</scope>
</reference>
<keyword id="KW-0007">Acetylation</keyword>
<keyword id="KW-0903">Direct protein sequencing</keyword>
<keyword id="KW-0505">Motor protein</keyword>
<keyword id="KW-0514">Muscle protein</keyword>
<keyword id="KW-0518">Myosin</keyword>
<keyword id="KW-0677">Repeat</keyword>
<dbReference type="PIR" id="B26092">
    <property type="entry name" value="B26092"/>
</dbReference>
<dbReference type="SMR" id="P07462"/>
<dbReference type="GO" id="GO:0016460">
    <property type="term" value="C:myosin II complex"/>
    <property type="evidence" value="ECO:0007669"/>
    <property type="project" value="TreeGrafter"/>
</dbReference>
<dbReference type="GO" id="GO:0005509">
    <property type="term" value="F:calcium ion binding"/>
    <property type="evidence" value="ECO:0007669"/>
    <property type="project" value="InterPro"/>
</dbReference>
<dbReference type="FunFam" id="1.10.238.10:FF:000001">
    <property type="entry name" value="Calmodulin 1"/>
    <property type="match status" value="1"/>
</dbReference>
<dbReference type="Gene3D" id="1.10.238.10">
    <property type="entry name" value="EF-hand"/>
    <property type="match status" value="2"/>
</dbReference>
<dbReference type="InterPro" id="IPR050230">
    <property type="entry name" value="CALM/Myosin/TropC-like"/>
</dbReference>
<dbReference type="InterPro" id="IPR011992">
    <property type="entry name" value="EF-hand-dom_pair"/>
</dbReference>
<dbReference type="InterPro" id="IPR002048">
    <property type="entry name" value="EF_hand_dom"/>
</dbReference>
<dbReference type="PANTHER" id="PTHR23048">
    <property type="entry name" value="MYOSIN LIGHT CHAIN 1, 3"/>
    <property type="match status" value="1"/>
</dbReference>
<dbReference type="PANTHER" id="PTHR23048:SF1">
    <property type="entry name" value="MYOSIN LIGHT CHAIN 4"/>
    <property type="match status" value="1"/>
</dbReference>
<dbReference type="Pfam" id="PF13499">
    <property type="entry name" value="EF-hand_7"/>
    <property type="match status" value="1"/>
</dbReference>
<dbReference type="SUPFAM" id="SSF47473">
    <property type="entry name" value="EF-hand"/>
    <property type="match status" value="1"/>
</dbReference>
<dbReference type="PROSITE" id="PS50222">
    <property type="entry name" value="EF_HAND_2"/>
    <property type="match status" value="3"/>
</dbReference>
<accession>P07462</accession>
<name>MLE_HALRO</name>
<evidence type="ECO:0000255" key="1">
    <source>
        <dbReference type="PROSITE-ProRule" id="PRU00448"/>
    </source>
</evidence>
<evidence type="ECO:0000269" key="2">
    <source ref="1"/>
</evidence>
<comment type="function">
    <text>In molluscan muscle, calcium regulation is associated with myosin rather than with actin. Muscle myosin contains two types of light chains: the catalytic light chain, essential for ATPase activity, and the regulatory light chain, a calcium-binding protein responsible for Ca(2+) dependent binding and Ca(2+) dependent Mg-ATPase activity.</text>
</comment>
<organism>
    <name type="scientific">Halocynthia roretzi</name>
    <name type="common">Sea squirt</name>
    <name type="synonym">Cynthia roretzi</name>
    <dbReference type="NCBI Taxonomy" id="7729"/>
    <lineage>
        <taxon>Eukaryota</taxon>
        <taxon>Metazoa</taxon>
        <taxon>Chordata</taxon>
        <taxon>Tunicata</taxon>
        <taxon>Ascidiacea</taxon>
        <taxon>Stolidobranchia</taxon>
        <taxon>Pyuridae</taxon>
        <taxon>Halocynthia</taxon>
    </lineage>
</organism>
<sequence>ADFSDDRITECQEAFELFDRSAEGKVFLGQVGDILRALGQNPTNGDVTKVLGNPPKEELATKQVSFSEFLPMLAQIERQTEHGSYEDFVEGLRVFDKENNGKIMGAELRHVLSTLGEKMSEEEVEESLLQGQQDPNGCIHYEEFSKYLLEG</sequence>
<protein>
    <recommendedName>
        <fullName>Myosin catalytic light chain, smooth muscle</fullName>
    </recommendedName>
</protein>
<feature type="chain" id="PRO_0000198723" description="Myosin catalytic light chain, smooth muscle">
    <location>
        <begin position="1"/>
        <end position="151"/>
    </location>
</feature>
<feature type="domain" description="EF-hand 1" evidence="1">
    <location>
        <begin position="6"/>
        <end position="41"/>
    </location>
</feature>
<feature type="domain" description="EF-hand 2" evidence="1">
    <location>
        <begin position="83"/>
        <end position="118"/>
    </location>
</feature>
<feature type="domain" description="EF-hand 3" evidence="1">
    <location>
        <begin position="119"/>
        <end position="151"/>
    </location>
</feature>
<feature type="modified residue" description="N-acetylalanine" evidence="2">
    <location>
        <position position="1"/>
    </location>
</feature>
<proteinExistence type="evidence at protein level"/>